<keyword id="KW-0150">Chloroplast</keyword>
<keyword id="KW-0934">Plastid</keyword>
<keyword id="KW-0687">Ribonucleoprotein</keyword>
<keyword id="KW-0689">Ribosomal protein</keyword>
<keyword id="KW-0694">RNA-binding</keyword>
<keyword id="KW-0699">rRNA-binding</keyword>
<sequence>MDKSKLFLKSKRSFRRRLPPIGSGDRIDYRNMSLISRFISEQGKILSRRVNRLTLKQQRLITIAIKQARILSSLPFLNNEKQFERTESTPRTTGPRTRKK</sequence>
<proteinExistence type="inferred from homology"/>
<organism>
    <name type="scientific">Nandina domestica</name>
    <name type="common">Heavenly bamboo</name>
    <dbReference type="NCBI Taxonomy" id="41776"/>
    <lineage>
        <taxon>Eukaryota</taxon>
        <taxon>Viridiplantae</taxon>
        <taxon>Streptophyta</taxon>
        <taxon>Embryophyta</taxon>
        <taxon>Tracheophyta</taxon>
        <taxon>Spermatophyta</taxon>
        <taxon>Magnoliopsida</taxon>
        <taxon>Ranunculales</taxon>
        <taxon>Berberidaceae</taxon>
        <taxon>Nandinoideae</taxon>
        <taxon>Nandineae</taxon>
        <taxon>Nandina</taxon>
    </lineage>
</organism>
<accession>Q09FT9</accession>
<evidence type="ECO:0000255" key="1">
    <source>
        <dbReference type="HAMAP-Rule" id="MF_00270"/>
    </source>
</evidence>
<evidence type="ECO:0000256" key="2">
    <source>
        <dbReference type="SAM" id="MobiDB-lite"/>
    </source>
</evidence>
<evidence type="ECO:0000305" key="3"/>
<feature type="chain" id="PRO_0000345596" description="Small ribosomal subunit protein bS18c">
    <location>
        <begin position="1"/>
        <end position="100"/>
    </location>
</feature>
<feature type="region of interest" description="Disordered" evidence="2">
    <location>
        <begin position="81"/>
        <end position="100"/>
    </location>
</feature>
<feature type="compositionally biased region" description="Low complexity" evidence="2">
    <location>
        <begin position="89"/>
        <end position="100"/>
    </location>
</feature>
<geneLocation type="chloroplast"/>
<comment type="subunit">
    <text evidence="1">Part of the 30S ribosomal subunit.</text>
</comment>
<comment type="subcellular location">
    <subcellularLocation>
        <location>Plastid</location>
        <location>Chloroplast</location>
    </subcellularLocation>
</comment>
<comment type="similarity">
    <text evidence="1">Belongs to the bacterial ribosomal protein bS18 family.</text>
</comment>
<gene>
    <name evidence="1" type="primary">rps18</name>
</gene>
<dbReference type="EMBL" id="DQ923117">
    <property type="protein sequence ID" value="ABI49885.1"/>
    <property type="molecule type" value="Genomic_DNA"/>
</dbReference>
<dbReference type="RefSeq" id="YP_740672.1">
    <property type="nucleotide sequence ID" value="NC_008336.1"/>
</dbReference>
<dbReference type="SMR" id="Q09FT9"/>
<dbReference type="GeneID" id="4271682"/>
<dbReference type="GO" id="GO:0009507">
    <property type="term" value="C:chloroplast"/>
    <property type="evidence" value="ECO:0007669"/>
    <property type="project" value="UniProtKB-SubCell"/>
</dbReference>
<dbReference type="GO" id="GO:0005763">
    <property type="term" value="C:mitochondrial small ribosomal subunit"/>
    <property type="evidence" value="ECO:0007669"/>
    <property type="project" value="TreeGrafter"/>
</dbReference>
<dbReference type="GO" id="GO:0070181">
    <property type="term" value="F:small ribosomal subunit rRNA binding"/>
    <property type="evidence" value="ECO:0007669"/>
    <property type="project" value="TreeGrafter"/>
</dbReference>
<dbReference type="GO" id="GO:0003735">
    <property type="term" value="F:structural constituent of ribosome"/>
    <property type="evidence" value="ECO:0007669"/>
    <property type="project" value="InterPro"/>
</dbReference>
<dbReference type="GO" id="GO:0006412">
    <property type="term" value="P:translation"/>
    <property type="evidence" value="ECO:0007669"/>
    <property type="project" value="UniProtKB-UniRule"/>
</dbReference>
<dbReference type="FunFam" id="4.10.640.10:FF:000002">
    <property type="entry name" value="30S ribosomal protein S18, chloroplastic"/>
    <property type="match status" value="1"/>
</dbReference>
<dbReference type="Gene3D" id="4.10.640.10">
    <property type="entry name" value="Ribosomal protein S18"/>
    <property type="match status" value="1"/>
</dbReference>
<dbReference type="HAMAP" id="MF_00270">
    <property type="entry name" value="Ribosomal_bS18"/>
    <property type="match status" value="1"/>
</dbReference>
<dbReference type="InterPro" id="IPR001648">
    <property type="entry name" value="Ribosomal_bS18"/>
</dbReference>
<dbReference type="InterPro" id="IPR018275">
    <property type="entry name" value="Ribosomal_bS18_CS"/>
</dbReference>
<dbReference type="InterPro" id="IPR036870">
    <property type="entry name" value="Ribosomal_bS18_sf"/>
</dbReference>
<dbReference type="NCBIfam" id="TIGR00165">
    <property type="entry name" value="S18"/>
    <property type="match status" value="1"/>
</dbReference>
<dbReference type="PANTHER" id="PTHR13479">
    <property type="entry name" value="30S RIBOSOMAL PROTEIN S18"/>
    <property type="match status" value="1"/>
</dbReference>
<dbReference type="PANTHER" id="PTHR13479:SF40">
    <property type="entry name" value="SMALL RIBOSOMAL SUBUNIT PROTEIN BS18M"/>
    <property type="match status" value="1"/>
</dbReference>
<dbReference type="Pfam" id="PF01084">
    <property type="entry name" value="Ribosomal_S18"/>
    <property type="match status" value="1"/>
</dbReference>
<dbReference type="PRINTS" id="PR00974">
    <property type="entry name" value="RIBOSOMALS18"/>
</dbReference>
<dbReference type="SUPFAM" id="SSF46911">
    <property type="entry name" value="Ribosomal protein S18"/>
    <property type="match status" value="1"/>
</dbReference>
<dbReference type="PROSITE" id="PS00057">
    <property type="entry name" value="RIBOSOMAL_S18"/>
    <property type="match status" value="1"/>
</dbReference>
<protein>
    <recommendedName>
        <fullName evidence="1">Small ribosomal subunit protein bS18c</fullName>
    </recommendedName>
    <alternativeName>
        <fullName evidence="3">30S ribosomal protein S18, chloroplastic</fullName>
    </alternativeName>
</protein>
<reference key="1">
    <citation type="journal article" date="2006" name="BMC Plant Biol.">
        <title>Rapid and accurate pyrosequencing of angiosperm plastid genomes.</title>
        <authorList>
            <person name="Moore M.J."/>
            <person name="Dhingra A."/>
            <person name="Soltis P.S."/>
            <person name="Shaw R."/>
            <person name="Farmerie W.G."/>
            <person name="Folta K.M."/>
            <person name="Soltis D.E."/>
        </authorList>
    </citation>
    <scope>NUCLEOTIDE SEQUENCE [LARGE SCALE GENOMIC DNA]</scope>
</reference>
<name>RR18_NANDO</name>